<protein>
    <recommendedName>
        <fullName>Integrator complex subunit 12</fullName>
        <shortName>Int12</shortName>
    </recommendedName>
    <alternativeName>
        <fullName>PHD finger protein 22</fullName>
    </alternativeName>
</protein>
<name>INT12_MOUSE</name>
<comment type="function">
    <text evidence="1">Component of the integrator complex, a multiprotein complex that terminates RNA polymerase II (Pol II) transcription in the promoter-proximal region of genes. The integrator complex provides a quality checkpoint during transcription elongation by driving premature transcription termination of transcripts that are unfavorably configured for transcriptional elongation: the complex terminates transcription by (1) catalyzing dephosphorylation of the C-terminal domain (CTD) of Pol II subunit POLR2A/RPB1 and SUPT5H/SPT5, (2) degrading the exiting nascent RNA transcript via endonuclease activity and (3) promoting the release of Pol II from bound DNA. The integrator complex is also involved in terminating the synthesis of non-coding Pol II transcripts, such as enhancer RNAs (eRNAs), small nuclear RNAs (snRNAs), telomerase RNAs and long non-coding RNAs (lncRNAs). Mediates recruitment of cytoplasmic dynein to the nuclear envelope, probably as component of the integrator complex.</text>
</comment>
<comment type="subunit">
    <text evidence="1">Component of the Integrator complex, composed of core subunits INTS1, INTS2, INTS3, INTS4, INTS5, INTS6, INTS7, INTS8, INTS9/RC74, INTS10, INTS11/CPSF3L, INTS12, INTS13, INTS14 and INTS15. The core complex associates with protein phosphatase 2A subunits PPP2CA and PPP2R1A, to form the Integrator-PP2A (INTAC) complex.</text>
</comment>
<comment type="subcellular location">
    <subcellularLocation>
        <location evidence="1">Nucleus</location>
    </subcellularLocation>
</comment>
<comment type="PTM">
    <text evidence="1">Dephosphorylated at Ser-127 by the PNUTS-PP1 complex, promoting RNA polymerase II transcription pause-release.</text>
</comment>
<comment type="similarity">
    <text evidence="4">Belongs to the Integrator subunit 12 family.</text>
</comment>
<gene>
    <name type="primary">Ints12</name>
    <name type="synonym">Phf22</name>
</gene>
<feature type="chain" id="PRO_0000059314" description="Integrator complex subunit 12">
    <location>
        <begin position="1"/>
        <end position="461"/>
    </location>
</feature>
<feature type="zinc finger region" description="PHD-type" evidence="2">
    <location>
        <begin position="158"/>
        <end position="214"/>
    </location>
</feature>
<feature type="region of interest" description="Disordered" evidence="3">
    <location>
        <begin position="42"/>
        <end position="131"/>
    </location>
</feature>
<feature type="region of interest" description="Disordered" evidence="3">
    <location>
        <begin position="302"/>
        <end position="443"/>
    </location>
</feature>
<feature type="compositionally biased region" description="Basic and acidic residues" evidence="3">
    <location>
        <begin position="88"/>
        <end position="124"/>
    </location>
</feature>
<feature type="compositionally biased region" description="Polar residues" evidence="3">
    <location>
        <begin position="302"/>
        <end position="328"/>
    </location>
</feature>
<feature type="compositionally biased region" description="Low complexity" evidence="3">
    <location>
        <begin position="348"/>
        <end position="357"/>
    </location>
</feature>
<feature type="compositionally biased region" description="Low complexity" evidence="3">
    <location>
        <begin position="381"/>
        <end position="436"/>
    </location>
</feature>
<feature type="modified residue" description="Phosphoserine" evidence="1">
    <location>
        <position position="127"/>
    </location>
</feature>
<feature type="cross-link" description="Glycyl lysine isopeptide (Lys-Gly) (interchain with G-Cter in SUMO2)" evidence="1">
    <location>
        <position position="68"/>
    </location>
</feature>
<feature type="cross-link" description="Glycyl lysine isopeptide (Lys-Gly) (interchain with G-Cter in SUMO2)" evidence="1">
    <location>
        <position position="253"/>
    </location>
</feature>
<feature type="helix" evidence="5">
    <location>
        <begin position="154"/>
        <end position="157"/>
    </location>
</feature>
<feature type="strand" evidence="5">
    <location>
        <begin position="162"/>
        <end position="164"/>
    </location>
</feature>
<feature type="strand" evidence="5">
    <location>
        <begin position="175"/>
        <end position="177"/>
    </location>
</feature>
<feature type="strand" evidence="5">
    <location>
        <begin position="179"/>
        <end position="181"/>
    </location>
</feature>
<feature type="strand" evidence="5">
    <location>
        <begin position="184"/>
        <end position="186"/>
    </location>
</feature>
<feature type="turn" evidence="5">
    <location>
        <begin position="187"/>
        <end position="189"/>
    </location>
</feature>
<feature type="strand" evidence="5">
    <location>
        <begin position="190"/>
        <end position="192"/>
    </location>
</feature>
<feature type="helix" evidence="5">
    <location>
        <begin position="196"/>
        <end position="200"/>
    </location>
</feature>
<feature type="helix" evidence="5">
    <location>
        <begin position="209"/>
        <end position="215"/>
    </location>
</feature>
<accession>Q9D168</accession>
<accession>Q3U2Q5</accession>
<accession>Q921U2</accession>
<evidence type="ECO:0000250" key="1">
    <source>
        <dbReference type="UniProtKB" id="Q96CB8"/>
    </source>
</evidence>
<evidence type="ECO:0000255" key="2">
    <source>
        <dbReference type="PROSITE-ProRule" id="PRU00146"/>
    </source>
</evidence>
<evidence type="ECO:0000256" key="3">
    <source>
        <dbReference type="SAM" id="MobiDB-lite"/>
    </source>
</evidence>
<evidence type="ECO:0000305" key="4"/>
<evidence type="ECO:0007829" key="5">
    <source>
        <dbReference type="PDB" id="1WEV"/>
    </source>
</evidence>
<sequence>MAATVNLELDPIFLKALGFLHSKSKDSAEKLKALLDESLARGIDSSYRPTQKDVEPPKISSTKSLSIKQEPKTSSSLPSGSSNGKVLTAEKIKKEAEKRPADKMKDVTEGIDVPKKPRLEKPETRSSPITVQTSKDLSMADLSSFEETSADDFAMEMGLACVVCRQMTVASGNQLVECQECHNLYHQDCHKPQVTDKEVNDPRLVWYCARCTRQMKRMAQKTQKPPQKPAPTVVSVTPTVKDPLVKKPETKLKQETTFLAFKRTEVKPSTVISGNSSSNNVSSSVTSGLTGWAAFAAKTSSAGPSTAKLNSAAQNSSGKPAASSSNQKPVGLTGLATSSKGGIGSKIGSGNSTSPSVPLKPLPPLTLGKTGLSRSVSCDNVSKVGLPSPSSLVPGGSSQLSGNGNSATTGPSGSTTSKATSETSSSTSASLKGPTSQESQLNAMKRLQMVKKKAAQKKLKK</sequence>
<keyword id="KW-0002">3D-structure</keyword>
<keyword id="KW-1017">Isopeptide bond</keyword>
<keyword id="KW-0479">Metal-binding</keyword>
<keyword id="KW-0539">Nucleus</keyword>
<keyword id="KW-0597">Phosphoprotein</keyword>
<keyword id="KW-1185">Reference proteome</keyword>
<keyword id="KW-0832">Ubl conjugation</keyword>
<keyword id="KW-0862">Zinc</keyword>
<keyword id="KW-0863">Zinc-finger</keyword>
<reference key="1">
    <citation type="journal article" date="2005" name="Science">
        <title>The transcriptional landscape of the mammalian genome.</title>
        <authorList>
            <person name="Carninci P."/>
            <person name="Kasukawa T."/>
            <person name="Katayama S."/>
            <person name="Gough J."/>
            <person name="Frith M.C."/>
            <person name="Maeda N."/>
            <person name="Oyama R."/>
            <person name="Ravasi T."/>
            <person name="Lenhard B."/>
            <person name="Wells C."/>
            <person name="Kodzius R."/>
            <person name="Shimokawa K."/>
            <person name="Bajic V.B."/>
            <person name="Brenner S.E."/>
            <person name="Batalov S."/>
            <person name="Forrest A.R."/>
            <person name="Zavolan M."/>
            <person name="Davis M.J."/>
            <person name="Wilming L.G."/>
            <person name="Aidinis V."/>
            <person name="Allen J.E."/>
            <person name="Ambesi-Impiombato A."/>
            <person name="Apweiler R."/>
            <person name="Aturaliya R.N."/>
            <person name="Bailey T.L."/>
            <person name="Bansal M."/>
            <person name="Baxter L."/>
            <person name="Beisel K.W."/>
            <person name="Bersano T."/>
            <person name="Bono H."/>
            <person name="Chalk A.M."/>
            <person name="Chiu K.P."/>
            <person name="Choudhary V."/>
            <person name="Christoffels A."/>
            <person name="Clutterbuck D.R."/>
            <person name="Crowe M.L."/>
            <person name="Dalla E."/>
            <person name="Dalrymple B.P."/>
            <person name="de Bono B."/>
            <person name="Della Gatta G."/>
            <person name="di Bernardo D."/>
            <person name="Down T."/>
            <person name="Engstrom P."/>
            <person name="Fagiolini M."/>
            <person name="Faulkner G."/>
            <person name="Fletcher C.F."/>
            <person name="Fukushima T."/>
            <person name="Furuno M."/>
            <person name="Futaki S."/>
            <person name="Gariboldi M."/>
            <person name="Georgii-Hemming P."/>
            <person name="Gingeras T.R."/>
            <person name="Gojobori T."/>
            <person name="Green R.E."/>
            <person name="Gustincich S."/>
            <person name="Harbers M."/>
            <person name="Hayashi Y."/>
            <person name="Hensch T.K."/>
            <person name="Hirokawa N."/>
            <person name="Hill D."/>
            <person name="Huminiecki L."/>
            <person name="Iacono M."/>
            <person name="Ikeo K."/>
            <person name="Iwama A."/>
            <person name="Ishikawa T."/>
            <person name="Jakt M."/>
            <person name="Kanapin A."/>
            <person name="Katoh M."/>
            <person name="Kawasawa Y."/>
            <person name="Kelso J."/>
            <person name="Kitamura H."/>
            <person name="Kitano H."/>
            <person name="Kollias G."/>
            <person name="Krishnan S.P."/>
            <person name="Kruger A."/>
            <person name="Kummerfeld S.K."/>
            <person name="Kurochkin I.V."/>
            <person name="Lareau L.F."/>
            <person name="Lazarevic D."/>
            <person name="Lipovich L."/>
            <person name="Liu J."/>
            <person name="Liuni S."/>
            <person name="McWilliam S."/>
            <person name="Madan Babu M."/>
            <person name="Madera M."/>
            <person name="Marchionni L."/>
            <person name="Matsuda H."/>
            <person name="Matsuzawa S."/>
            <person name="Miki H."/>
            <person name="Mignone F."/>
            <person name="Miyake S."/>
            <person name="Morris K."/>
            <person name="Mottagui-Tabar S."/>
            <person name="Mulder N."/>
            <person name="Nakano N."/>
            <person name="Nakauchi H."/>
            <person name="Ng P."/>
            <person name="Nilsson R."/>
            <person name="Nishiguchi S."/>
            <person name="Nishikawa S."/>
            <person name="Nori F."/>
            <person name="Ohara O."/>
            <person name="Okazaki Y."/>
            <person name="Orlando V."/>
            <person name="Pang K.C."/>
            <person name="Pavan W.J."/>
            <person name="Pavesi G."/>
            <person name="Pesole G."/>
            <person name="Petrovsky N."/>
            <person name="Piazza S."/>
            <person name="Reed J."/>
            <person name="Reid J.F."/>
            <person name="Ring B.Z."/>
            <person name="Ringwald M."/>
            <person name="Rost B."/>
            <person name="Ruan Y."/>
            <person name="Salzberg S.L."/>
            <person name="Sandelin A."/>
            <person name="Schneider C."/>
            <person name="Schoenbach C."/>
            <person name="Sekiguchi K."/>
            <person name="Semple C.A."/>
            <person name="Seno S."/>
            <person name="Sessa L."/>
            <person name="Sheng Y."/>
            <person name="Shibata Y."/>
            <person name="Shimada H."/>
            <person name="Shimada K."/>
            <person name="Silva D."/>
            <person name="Sinclair B."/>
            <person name="Sperling S."/>
            <person name="Stupka E."/>
            <person name="Sugiura K."/>
            <person name="Sultana R."/>
            <person name="Takenaka Y."/>
            <person name="Taki K."/>
            <person name="Tammoja K."/>
            <person name="Tan S.L."/>
            <person name="Tang S."/>
            <person name="Taylor M.S."/>
            <person name="Tegner J."/>
            <person name="Teichmann S.A."/>
            <person name="Ueda H.R."/>
            <person name="van Nimwegen E."/>
            <person name="Verardo R."/>
            <person name="Wei C.L."/>
            <person name="Yagi K."/>
            <person name="Yamanishi H."/>
            <person name="Zabarovsky E."/>
            <person name="Zhu S."/>
            <person name="Zimmer A."/>
            <person name="Hide W."/>
            <person name="Bult C."/>
            <person name="Grimmond S.M."/>
            <person name="Teasdale R.D."/>
            <person name="Liu E.T."/>
            <person name="Brusic V."/>
            <person name="Quackenbush J."/>
            <person name="Wahlestedt C."/>
            <person name="Mattick J.S."/>
            <person name="Hume D.A."/>
            <person name="Kai C."/>
            <person name="Sasaki D."/>
            <person name="Tomaru Y."/>
            <person name="Fukuda S."/>
            <person name="Kanamori-Katayama M."/>
            <person name="Suzuki M."/>
            <person name="Aoki J."/>
            <person name="Arakawa T."/>
            <person name="Iida J."/>
            <person name="Imamura K."/>
            <person name="Itoh M."/>
            <person name="Kato T."/>
            <person name="Kawaji H."/>
            <person name="Kawagashira N."/>
            <person name="Kawashima T."/>
            <person name="Kojima M."/>
            <person name="Kondo S."/>
            <person name="Konno H."/>
            <person name="Nakano K."/>
            <person name="Ninomiya N."/>
            <person name="Nishio T."/>
            <person name="Okada M."/>
            <person name="Plessy C."/>
            <person name="Shibata K."/>
            <person name="Shiraki T."/>
            <person name="Suzuki S."/>
            <person name="Tagami M."/>
            <person name="Waki K."/>
            <person name="Watahiki A."/>
            <person name="Okamura-Oho Y."/>
            <person name="Suzuki H."/>
            <person name="Kawai J."/>
            <person name="Hayashizaki Y."/>
        </authorList>
    </citation>
    <scope>NUCLEOTIDE SEQUENCE [LARGE SCALE MRNA]</scope>
    <source>
        <strain>C57BL/6J</strain>
        <strain>NOD</strain>
        <tissue>Embryo</tissue>
    </source>
</reference>
<reference key="2">
    <citation type="journal article" date="2004" name="Genome Res.">
        <title>The status, quality, and expansion of the NIH full-length cDNA project: the Mammalian Gene Collection (MGC).</title>
        <authorList>
            <consortium name="The MGC Project Team"/>
        </authorList>
    </citation>
    <scope>NUCLEOTIDE SEQUENCE [LARGE SCALE MRNA]</scope>
    <source>
        <strain>FVB/N</strain>
        <tissue>Eye</tissue>
        <tissue>Mammary gland</tissue>
        <tissue>Mammary tumor</tissue>
    </source>
</reference>
<reference key="3">
    <citation type="submission" date="2004-11" db="PDB data bank">
        <title>Solution structure of PHD domain in protein NP_082203.</title>
        <authorList>
            <consortium name="RIKEN structural genomics initiative (RSGI)"/>
        </authorList>
    </citation>
    <scope>STRUCTURE BY NMR OF 150-224</scope>
</reference>
<proteinExistence type="evidence at protein level"/>
<dbReference type="EMBL" id="AK003874">
    <property type="protein sequence ID" value="BAB23052.1"/>
    <property type="molecule type" value="mRNA"/>
</dbReference>
<dbReference type="EMBL" id="AK155162">
    <property type="protein sequence ID" value="BAE33085.1"/>
    <property type="molecule type" value="mRNA"/>
</dbReference>
<dbReference type="EMBL" id="BC010657">
    <property type="protein sequence ID" value="AAH10657.1"/>
    <property type="molecule type" value="mRNA"/>
</dbReference>
<dbReference type="EMBL" id="BC023801">
    <property type="protein sequence ID" value="AAH23801.1"/>
    <property type="molecule type" value="mRNA"/>
</dbReference>
<dbReference type="EMBL" id="BC046996">
    <property type="protein sequence ID" value="AAH46996.1"/>
    <property type="molecule type" value="mRNA"/>
</dbReference>
<dbReference type="CCDS" id="CCDS17848.1"/>
<dbReference type="RefSeq" id="NP_082203.1">
    <property type="nucleotide sequence ID" value="NM_027927.4"/>
</dbReference>
<dbReference type="PDB" id="1WEV">
    <property type="method" value="NMR"/>
    <property type="chains" value="A=150-224"/>
</dbReference>
<dbReference type="PDBsum" id="1WEV"/>
<dbReference type="SMR" id="Q9D168"/>
<dbReference type="BioGRID" id="214931">
    <property type="interactions" value="1"/>
</dbReference>
<dbReference type="FunCoup" id="Q9D168">
    <property type="interactions" value="3384"/>
</dbReference>
<dbReference type="STRING" id="10090.ENSMUSP00000029650"/>
<dbReference type="GlyGen" id="Q9D168">
    <property type="glycosylation" value="3 sites, 2 N-linked glycans (2 sites)"/>
</dbReference>
<dbReference type="iPTMnet" id="Q9D168"/>
<dbReference type="PhosphoSitePlus" id="Q9D168"/>
<dbReference type="SwissPalm" id="Q9D168"/>
<dbReference type="jPOST" id="Q9D168"/>
<dbReference type="PaxDb" id="10090-ENSMUSP00000029650"/>
<dbReference type="PeptideAtlas" id="Q9D168"/>
<dbReference type="ProteomicsDB" id="268974"/>
<dbReference type="Pumba" id="Q9D168"/>
<dbReference type="Antibodypedia" id="26162">
    <property type="antibodies" value="79 antibodies from 21 providers"/>
</dbReference>
<dbReference type="Ensembl" id="ENSMUST00000029650.9">
    <property type="protein sequence ID" value="ENSMUSP00000029650.9"/>
    <property type="gene ID" value="ENSMUSG00000028016.10"/>
</dbReference>
<dbReference type="GeneID" id="71793"/>
<dbReference type="KEGG" id="mmu:71793"/>
<dbReference type="UCSC" id="uc008rkj.1">
    <property type="organism name" value="mouse"/>
</dbReference>
<dbReference type="AGR" id="MGI:1919043"/>
<dbReference type="CTD" id="57117"/>
<dbReference type="MGI" id="MGI:1919043">
    <property type="gene designation" value="Ints12"/>
</dbReference>
<dbReference type="VEuPathDB" id="HostDB:ENSMUSG00000028016"/>
<dbReference type="eggNOG" id="KOG4323">
    <property type="taxonomic scope" value="Eukaryota"/>
</dbReference>
<dbReference type="GeneTree" id="ENSGT00390000005218"/>
<dbReference type="HOGENOM" id="CLU_033336_0_0_1"/>
<dbReference type="InParanoid" id="Q9D168"/>
<dbReference type="OMA" id="QECHCLY"/>
<dbReference type="OrthoDB" id="5846437at2759"/>
<dbReference type="PhylomeDB" id="Q9D168"/>
<dbReference type="TreeFam" id="TF106418"/>
<dbReference type="Reactome" id="R-MMU-6807505">
    <property type="pathway name" value="RNA polymerase II transcribes snRNA genes"/>
</dbReference>
<dbReference type="BioGRID-ORCS" id="71793">
    <property type="hits" value="8 hits in 66 CRISPR screens"/>
</dbReference>
<dbReference type="ChiTaRS" id="Ints12">
    <property type="organism name" value="mouse"/>
</dbReference>
<dbReference type="EvolutionaryTrace" id="Q9D168"/>
<dbReference type="PRO" id="PR:Q9D168"/>
<dbReference type="Proteomes" id="UP000000589">
    <property type="component" value="Chromosome 3"/>
</dbReference>
<dbReference type="RNAct" id="Q9D168">
    <property type="molecule type" value="protein"/>
</dbReference>
<dbReference type="Bgee" id="ENSMUSG00000028016">
    <property type="expression patterns" value="Expressed in secondary oocyte and 250 other cell types or tissues"/>
</dbReference>
<dbReference type="GO" id="GO:0160232">
    <property type="term" value="C:INTAC complex"/>
    <property type="evidence" value="ECO:0000250"/>
    <property type="project" value="UniProtKB"/>
</dbReference>
<dbReference type="GO" id="GO:0032039">
    <property type="term" value="C:integrator complex"/>
    <property type="evidence" value="ECO:0000250"/>
    <property type="project" value="HGNC-UCL"/>
</dbReference>
<dbReference type="GO" id="GO:0005634">
    <property type="term" value="C:nucleus"/>
    <property type="evidence" value="ECO:0000250"/>
    <property type="project" value="UniProtKB"/>
</dbReference>
<dbReference type="GO" id="GO:0008270">
    <property type="term" value="F:zinc ion binding"/>
    <property type="evidence" value="ECO:0007669"/>
    <property type="project" value="UniProtKB-KW"/>
</dbReference>
<dbReference type="GO" id="GO:0160240">
    <property type="term" value="P:RNA polymerase II transcription initiation surveillance"/>
    <property type="evidence" value="ECO:0000250"/>
    <property type="project" value="UniProtKB"/>
</dbReference>
<dbReference type="GO" id="GO:0016180">
    <property type="term" value="P:snRNA processing"/>
    <property type="evidence" value="ECO:0000250"/>
    <property type="project" value="HGNC-UCL"/>
</dbReference>
<dbReference type="CDD" id="cd15501">
    <property type="entry name" value="PHD_Int12"/>
    <property type="match status" value="1"/>
</dbReference>
<dbReference type="FunFam" id="3.30.40.10:FF:000101">
    <property type="entry name" value="Integrator complex subunit 12"/>
    <property type="match status" value="1"/>
</dbReference>
<dbReference type="Gene3D" id="3.30.40.10">
    <property type="entry name" value="Zinc/RING finger domain, C3HC4 (zinc finger)"/>
    <property type="match status" value="1"/>
</dbReference>
<dbReference type="InterPro" id="IPR039054">
    <property type="entry name" value="Int12_PHD"/>
</dbReference>
<dbReference type="InterPro" id="IPR051776">
    <property type="entry name" value="Integrator_subunit_12"/>
</dbReference>
<dbReference type="InterPro" id="IPR019786">
    <property type="entry name" value="Zinc_finger_PHD-type_CS"/>
</dbReference>
<dbReference type="InterPro" id="IPR011011">
    <property type="entry name" value="Znf_FYVE_PHD"/>
</dbReference>
<dbReference type="InterPro" id="IPR001965">
    <property type="entry name" value="Znf_PHD"/>
</dbReference>
<dbReference type="InterPro" id="IPR019787">
    <property type="entry name" value="Znf_PHD-finger"/>
</dbReference>
<dbReference type="InterPro" id="IPR013083">
    <property type="entry name" value="Znf_RING/FYVE/PHD"/>
</dbReference>
<dbReference type="PANTHER" id="PTHR13415:SF2">
    <property type="entry name" value="INTEGRATOR COMPLEX SUBUNIT 12"/>
    <property type="match status" value="1"/>
</dbReference>
<dbReference type="PANTHER" id="PTHR13415">
    <property type="entry name" value="NUCLEAR FACTOR-RELATED"/>
    <property type="match status" value="1"/>
</dbReference>
<dbReference type="Pfam" id="PF00628">
    <property type="entry name" value="PHD"/>
    <property type="match status" value="1"/>
</dbReference>
<dbReference type="SMART" id="SM00249">
    <property type="entry name" value="PHD"/>
    <property type="match status" value="1"/>
</dbReference>
<dbReference type="SUPFAM" id="SSF57903">
    <property type="entry name" value="FYVE/PHD zinc finger"/>
    <property type="match status" value="1"/>
</dbReference>
<dbReference type="PROSITE" id="PS01359">
    <property type="entry name" value="ZF_PHD_1"/>
    <property type="match status" value="1"/>
</dbReference>
<dbReference type="PROSITE" id="PS50016">
    <property type="entry name" value="ZF_PHD_2"/>
    <property type="match status" value="1"/>
</dbReference>
<organism>
    <name type="scientific">Mus musculus</name>
    <name type="common">Mouse</name>
    <dbReference type="NCBI Taxonomy" id="10090"/>
    <lineage>
        <taxon>Eukaryota</taxon>
        <taxon>Metazoa</taxon>
        <taxon>Chordata</taxon>
        <taxon>Craniata</taxon>
        <taxon>Vertebrata</taxon>
        <taxon>Euteleostomi</taxon>
        <taxon>Mammalia</taxon>
        <taxon>Eutheria</taxon>
        <taxon>Euarchontoglires</taxon>
        <taxon>Glires</taxon>
        <taxon>Rodentia</taxon>
        <taxon>Myomorpha</taxon>
        <taxon>Muroidea</taxon>
        <taxon>Muridae</taxon>
        <taxon>Murinae</taxon>
        <taxon>Mus</taxon>
        <taxon>Mus</taxon>
    </lineage>
</organism>